<feature type="chain" id="PRO_1000196106" description="Large ribosomal subunit protein bL34">
    <location>
        <begin position="1"/>
        <end position="46"/>
    </location>
</feature>
<evidence type="ECO:0000255" key="1">
    <source>
        <dbReference type="HAMAP-Rule" id="MF_00391"/>
    </source>
</evidence>
<evidence type="ECO:0000305" key="2"/>
<sequence length="46" mass="5380">MKRTFQPSVLKRNRSHGFRARMATKNGRQVLARRRAKGRARLTVSK</sequence>
<gene>
    <name evidence="1" type="primary">rpmH</name>
    <name type="ordered locus">SPC_3926</name>
</gene>
<name>RL34_SALPC</name>
<reference key="1">
    <citation type="journal article" date="2009" name="PLoS ONE">
        <title>Salmonella paratyphi C: genetic divergence from Salmonella choleraesuis and pathogenic convergence with Salmonella typhi.</title>
        <authorList>
            <person name="Liu W.-Q."/>
            <person name="Feng Y."/>
            <person name="Wang Y."/>
            <person name="Zou Q.-H."/>
            <person name="Chen F."/>
            <person name="Guo J.-T."/>
            <person name="Peng Y.-H."/>
            <person name="Jin Y."/>
            <person name="Li Y.-G."/>
            <person name="Hu S.-N."/>
            <person name="Johnston R.N."/>
            <person name="Liu G.-R."/>
            <person name="Liu S.-L."/>
        </authorList>
    </citation>
    <scope>NUCLEOTIDE SEQUENCE [LARGE SCALE GENOMIC DNA]</scope>
    <source>
        <strain>RKS4594</strain>
    </source>
</reference>
<accession>C0Q2L0</accession>
<dbReference type="EMBL" id="CP000857">
    <property type="protein sequence ID" value="ACN47996.1"/>
    <property type="molecule type" value="Genomic_DNA"/>
</dbReference>
<dbReference type="RefSeq" id="WP_000831330.1">
    <property type="nucleotide sequence ID" value="NC_012125.1"/>
</dbReference>
<dbReference type="SMR" id="C0Q2L0"/>
<dbReference type="GeneID" id="98190980"/>
<dbReference type="KEGG" id="sei:SPC_3926"/>
<dbReference type="HOGENOM" id="CLU_129938_2_1_6"/>
<dbReference type="Proteomes" id="UP000001599">
    <property type="component" value="Chromosome"/>
</dbReference>
<dbReference type="GO" id="GO:1990904">
    <property type="term" value="C:ribonucleoprotein complex"/>
    <property type="evidence" value="ECO:0007669"/>
    <property type="project" value="UniProtKB-KW"/>
</dbReference>
<dbReference type="GO" id="GO:0005840">
    <property type="term" value="C:ribosome"/>
    <property type="evidence" value="ECO:0007669"/>
    <property type="project" value="UniProtKB-KW"/>
</dbReference>
<dbReference type="GO" id="GO:0003735">
    <property type="term" value="F:structural constituent of ribosome"/>
    <property type="evidence" value="ECO:0007669"/>
    <property type="project" value="InterPro"/>
</dbReference>
<dbReference type="GO" id="GO:0006412">
    <property type="term" value="P:translation"/>
    <property type="evidence" value="ECO:0007669"/>
    <property type="project" value="UniProtKB-UniRule"/>
</dbReference>
<dbReference type="FunFam" id="1.10.287.3980:FF:000001">
    <property type="entry name" value="Mitochondrial ribosomal protein L34"/>
    <property type="match status" value="1"/>
</dbReference>
<dbReference type="Gene3D" id="1.10.287.3980">
    <property type="match status" value="1"/>
</dbReference>
<dbReference type="HAMAP" id="MF_00391">
    <property type="entry name" value="Ribosomal_bL34"/>
    <property type="match status" value="1"/>
</dbReference>
<dbReference type="InterPro" id="IPR000271">
    <property type="entry name" value="Ribosomal_bL34"/>
</dbReference>
<dbReference type="InterPro" id="IPR020939">
    <property type="entry name" value="Ribosomal_bL34_CS"/>
</dbReference>
<dbReference type="NCBIfam" id="TIGR01030">
    <property type="entry name" value="rpmH_bact"/>
    <property type="match status" value="1"/>
</dbReference>
<dbReference type="PANTHER" id="PTHR14503:SF4">
    <property type="entry name" value="LARGE RIBOSOMAL SUBUNIT PROTEIN BL34M"/>
    <property type="match status" value="1"/>
</dbReference>
<dbReference type="PANTHER" id="PTHR14503">
    <property type="entry name" value="MITOCHONDRIAL RIBOSOMAL PROTEIN 34 FAMILY MEMBER"/>
    <property type="match status" value="1"/>
</dbReference>
<dbReference type="Pfam" id="PF00468">
    <property type="entry name" value="Ribosomal_L34"/>
    <property type="match status" value="1"/>
</dbReference>
<dbReference type="PROSITE" id="PS00784">
    <property type="entry name" value="RIBOSOMAL_L34"/>
    <property type="match status" value="1"/>
</dbReference>
<keyword id="KW-0687">Ribonucleoprotein</keyword>
<keyword id="KW-0689">Ribosomal protein</keyword>
<protein>
    <recommendedName>
        <fullName evidence="1">Large ribosomal subunit protein bL34</fullName>
    </recommendedName>
    <alternativeName>
        <fullName evidence="2">50S ribosomal protein L34</fullName>
    </alternativeName>
</protein>
<proteinExistence type="inferred from homology"/>
<comment type="similarity">
    <text evidence="1">Belongs to the bacterial ribosomal protein bL34 family.</text>
</comment>
<organism>
    <name type="scientific">Salmonella paratyphi C (strain RKS4594)</name>
    <dbReference type="NCBI Taxonomy" id="476213"/>
    <lineage>
        <taxon>Bacteria</taxon>
        <taxon>Pseudomonadati</taxon>
        <taxon>Pseudomonadota</taxon>
        <taxon>Gammaproteobacteria</taxon>
        <taxon>Enterobacterales</taxon>
        <taxon>Enterobacteriaceae</taxon>
        <taxon>Salmonella</taxon>
    </lineage>
</organism>